<name>NADK_MANSM</name>
<comment type="function">
    <text evidence="1">Involved in the regulation of the intracellular balance of NAD and NADP, and is a key enzyme in the biosynthesis of NADP. Catalyzes specifically the phosphorylation on 2'-hydroxyl of the adenosine moiety of NAD to yield NADP.</text>
</comment>
<comment type="catalytic activity">
    <reaction evidence="1">
        <text>NAD(+) + ATP = ADP + NADP(+) + H(+)</text>
        <dbReference type="Rhea" id="RHEA:18629"/>
        <dbReference type="ChEBI" id="CHEBI:15378"/>
        <dbReference type="ChEBI" id="CHEBI:30616"/>
        <dbReference type="ChEBI" id="CHEBI:57540"/>
        <dbReference type="ChEBI" id="CHEBI:58349"/>
        <dbReference type="ChEBI" id="CHEBI:456216"/>
        <dbReference type="EC" id="2.7.1.23"/>
    </reaction>
</comment>
<comment type="cofactor">
    <cofactor evidence="1">
        <name>a divalent metal cation</name>
        <dbReference type="ChEBI" id="CHEBI:60240"/>
    </cofactor>
</comment>
<comment type="subcellular location">
    <subcellularLocation>
        <location evidence="1">Cytoplasm</location>
    </subcellularLocation>
</comment>
<comment type="similarity">
    <text evidence="1">Belongs to the NAD kinase family.</text>
</comment>
<comment type="sequence caution" evidence="2">
    <conflict type="erroneous initiation">
        <sequence resource="EMBL-CDS" id="AAU37349"/>
    </conflict>
    <text>Extended N-terminus.</text>
</comment>
<evidence type="ECO:0000255" key="1">
    <source>
        <dbReference type="HAMAP-Rule" id="MF_00361"/>
    </source>
</evidence>
<evidence type="ECO:0000305" key="2"/>
<reference key="1">
    <citation type="journal article" date="2004" name="Nat. Biotechnol.">
        <title>The genome sequence of the capnophilic rumen bacterium Mannheimia succiniciproducens.</title>
        <authorList>
            <person name="Hong S.H."/>
            <person name="Kim J.S."/>
            <person name="Lee S.Y."/>
            <person name="In Y.H."/>
            <person name="Choi S.S."/>
            <person name="Rih J.-K."/>
            <person name="Kim C.H."/>
            <person name="Jeong H."/>
            <person name="Hur C.G."/>
            <person name="Kim J.J."/>
        </authorList>
    </citation>
    <scope>NUCLEOTIDE SEQUENCE [LARGE SCALE GENOMIC DNA]</scope>
    <source>
        <strain>KCTC 0769BP / MBEL55E</strain>
    </source>
</reference>
<feature type="chain" id="PRO_0000229652" description="NAD kinase">
    <location>
        <begin position="1"/>
        <end position="301"/>
    </location>
</feature>
<feature type="active site" description="Proton acceptor" evidence="1">
    <location>
        <position position="81"/>
    </location>
</feature>
<feature type="binding site" evidence="1">
    <location>
        <begin position="81"/>
        <end position="82"/>
    </location>
    <ligand>
        <name>NAD(+)</name>
        <dbReference type="ChEBI" id="CHEBI:57540"/>
    </ligand>
</feature>
<feature type="binding site" evidence="1">
    <location>
        <begin position="155"/>
        <end position="156"/>
    </location>
    <ligand>
        <name>NAD(+)</name>
        <dbReference type="ChEBI" id="CHEBI:57540"/>
    </ligand>
</feature>
<feature type="binding site" evidence="1">
    <location>
        <position position="166"/>
    </location>
    <ligand>
        <name>NAD(+)</name>
        <dbReference type="ChEBI" id="CHEBI:57540"/>
    </ligand>
</feature>
<feature type="binding site" evidence="1">
    <location>
        <position position="183"/>
    </location>
    <ligand>
        <name>NAD(+)</name>
        <dbReference type="ChEBI" id="CHEBI:57540"/>
    </ligand>
</feature>
<feature type="binding site" evidence="1">
    <location>
        <position position="185"/>
    </location>
    <ligand>
        <name>NAD(+)</name>
        <dbReference type="ChEBI" id="CHEBI:57540"/>
    </ligand>
</feature>
<feature type="binding site" evidence="1">
    <location>
        <begin position="196"/>
        <end position="201"/>
    </location>
    <ligand>
        <name>NAD(+)</name>
        <dbReference type="ChEBI" id="CHEBI:57540"/>
    </ligand>
</feature>
<feature type="binding site" evidence="1">
    <location>
        <position position="256"/>
    </location>
    <ligand>
        <name>NAD(+)</name>
        <dbReference type="ChEBI" id="CHEBI:57540"/>
    </ligand>
</feature>
<organism>
    <name type="scientific">Mannheimia succiniciproducens (strain KCTC 0769BP / MBEL55E)</name>
    <dbReference type="NCBI Taxonomy" id="221988"/>
    <lineage>
        <taxon>Bacteria</taxon>
        <taxon>Pseudomonadati</taxon>
        <taxon>Pseudomonadota</taxon>
        <taxon>Gammaproteobacteria</taxon>
        <taxon>Pasteurellales</taxon>
        <taxon>Pasteurellaceae</taxon>
        <taxon>Basfia</taxon>
    </lineage>
</organism>
<accession>Q65UL1</accession>
<gene>
    <name evidence="1" type="primary">nadK</name>
    <name type="ordered locus">MS0742</name>
</gene>
<sequence>MSQDSVKSLQSTFKTVGVVGRPRNDSTLQMHKNIFHWLCEQGYQVLVENEIGKALNLSENHLASLDQIGQHAQLAIVIGGDGNMLSHARILCKYNTPLIGINRGNLGFLTDIDPKNAYAQLEACLNGEFFVEERFLLEAVVKRHGETVARGNAINELVIHPAKIAHMIDFHVYIDDKFAFSQRSDGLIVATPTGSTAYSLSAGGPILTPQLNAIALVPMFPHTLSSRPLVVDGNSKISVNFAEYNIPQLEISCDSQLALDICCNDVVHIQKSPYKLRLLHLHNYNYYNVLSSKLGWLKKLF</sequence>
<proteinExistence type="inferred from homology"/>
<dbReference type="EC" id="2.7.1.23" evidence="1"/>
<dbReference type="EMBL" id="AE016827">
    <property type="protein sequence ID" value="AAU37349.1"/>
    <property type="status" value="ALT_INIT"/>
    <property type="molecule type" value="Genomic_DNA"/>
</dbReference>
<dbReference type="RefSeq" id="WP_041640154.1">
    <property type="nucleotide sequence ID" value="NC_006300.1"/>
</dbReference>
<dbReference type="SMR" id="Q65UL1"/>
<dbReference type="STRING" id="221988.MS0742"/>
<dbReference type="KEGG" id="msu:MS0742"/>
<dbReference type="eggNOG" id="COG0061">
    <property type="taxonomic scope" value="Bacteria"/>
</dbReference>
<dbReference type="HOGENOM" id="CLU_008831_0_1_6"/>
<dbReference type="Proteomes" id="UP000000607">
    <property type="component" value="Chromosome"/>
</dbReference>
<dbReference type="GO" id="GO:0005737">
    <property type="term" value="C:cytoplasm"/>
    <property type="evidence" value="ECO:0007669"/>
    <property type="project" value="UniProtKB-SubCell"/>
</dbReference>
<dbReference type="GO" id="GO:0005524">
    <property type="term" value="F:ATP binding"/>
    <property type="evidence" value="ECO:0007669"/>
    <property type="project" value="UniProtKB-KW"/>
</dbReference>
<dbReference type="GO" id="GO:0046872">
    <property type="term" value="F:metal ion binding"/>
    <property type="evidence" value="ECO:0007669"/>
    <property type="project" value="UniProtKB-UniRule"/>
</dbReference>
<dbReference type="GO" id="GO:0051287">
    <property type="term" value="F:NAD binding"/>
    <property type="evidence" value="ECO:0007669"/>
    <property type="project" value="UniProtKB-ARBA"/>
</dbReference>
<dbReference type="GO" id="GO:0003951">
    <property type="term" value="F:NAD+ kinase activity"/>
    <property type="evidence" value="ECO:0007669"/>
    <property type="project" value="UniProtKB-UniRule"/>
</dbReference>
<dbReference type="GO" id="GO:0019674">
    <property type="term" value="P:NAD metabolic process"/>
    <property type="evidence" value="ECO:0007669"/>
    <property type="project" value="InterPro"/>
</dbReference>
<dbReference type="GO" id="GO:0006741">
    <property type="term" value="P:NADP biosynthetic process"/>
    <property type="evidence" value="ECO:0007669"/>
    <property type="project" value="UniProtKB-UniRule"/>
</dbReference>
<dbReference type="FunFam" id="2.60.200.30:FF:000001">
    <property type="entry name" value="NAD kinase"/>
    <property type="match status" value="1"/>
</dbReference>
<dbReference type="Gene3D" id="3.40.50.10330">
    <property type="entry name" value="Probable inorganic polyphosphate/atp-NAD kinase, domain 1"/>
    <property type="match status" value="1"/>
</dbReference>
<dbReference type="Gene3D" id="2.60.200.30">
    <property type="entry name" value="Probable inorganic polyphosphate/atp-NAD kinase, domain 2"/>
    <property type="match status" value="1"/>
</dbReference>
<dbReference type="HAMAP" id="MF_00361">
    <property type="entry name" value="NAD_kinase"/>
    <property type="match status" value="1"/>
</dbReference>
<dbReference type="InterPro" id="IPR017438">
    <property type="entry name" value="ATP-NAD_kinase_N"/>
</dbReference>
<dbReference type="InterPro" id="IPR017437">
    <property type="entry name" value="ATP-NAD_kinase_PpnK-typ_C"/>
</dbReference>
<dbReference type="InterPro" id="IPR016064">
    <property type="entry name" value="NAD/diacylglycerol_kinase_sf"/>
</dbReference>
<dbReference type="InterPro" id="IPR002504">
    <property type="entry name" value="NADK"/>
</dbReference>
<dbReference type="NCBIfam" id="NF002306">
    <property type="entry name" value="PRK01231.1"/>
    <property type="match status" value="1"/>
</dbReference>
<dbReference type="NCBIfam" id="NF002579">
    <property type="entry name" value="PRK02231.1"/>
    <property type="match status" value="1"/>
</dbReference>
<dbReference type="NCBIfam" id="NF002893">
    <property type="entry name" value="PRK03378.1"/>
    <property type="match status" value="1"/>
</dbReference>
<dbReference type="PANTHER" id="PTHR20275">
    <property type="entry name" value="NAD KINASE"/>
    <property type="match status" value="1"/>
</dbReference>
<dbReference type="PANTHER" id="PTHR20275:SF0">
    <property type="entry name" value="NAD KINASE"/>
    <property type="match status" value="1"/>
</dbReference>
<dbReference type="Pfam" id="PF01513">
    <property type="entry name" value="NAD_kinase"/>
    <property type="match status" value="1"/>
</dbReference>
<dbReference type="Pfam" id="PF20143">
    <property type="entry name" value="NAD_kinase_C"/>
    <property type="match status" value="1"/>
</dbReference>
<dbReference type="SUPFAM" id="SSF111331">
    <property type="entry name" value="NAD kinase/diacylglycerol kinase-like"/>
    <property type="match status" value="1"/>
</dbReference>
<protein>
    <recommendedName>
        <fullName evidence="1">NAD kinase</fullName>
        <ecNumber evidence="1">2.7.1.23</ecNumber>
    </recommendedName>
    <alternativeName>
        <fullName evidence="1">ATP-dependent NAD kinase</fullName>
    </alternativeName>
</protein>
<keyword id="KW-0067">ATP-binding</keyword>
<keyword id="KW-0963">Cytoplasm</keyword>
<keyword id="KW-0418">Kinase</keyword>
<keyword id="KW-0520">NAD</keyword>
<keyword id="KW-0521">NADP</keyword>
<keyword id="KW-0547">Nucleotide-binding</keyword>
<keyword id="KW-0808">Transferase</keyword>